<name>TPS2_XANST</name>
<keyword id="KW-0963">Cytoplasm</keyword>
<keyword id="KW-0456">Lyase</keyword>
<keyword id="KW-0460">Magnesium</keyword>
<keyword id="KW-0479">Metal-binding</keyword>
<organism>
    <name type="scientific">Xanthium strumarium</name>
    <name type="common">Rough cocklebur</name>
    <dbReference type="NCBI Taxonomy" id="318068"/>
    <lineage>
        <taxon>Eukaryota</taxon>
        <taxon>Viridiplantae</taxon>
        <taxon>Streptophyta</taxon>
        <taxon>Embryophyta</taxon>
        <taxon>Tracheophyta</taxon>
        <taxon>Spermatophyta</taxon>
        <taxon>Magnoliopsida</taxon>
        <taxon>eudicotyledons</taxon>
        <taxon>Gunneridae</taxon>
        <taxon>Pentapetalae</taxon>
        <taxon>asterids</taxon>
        <taxon>campanulids</taxon>
        <taxon>Asterales</taxon>
        <taxon>Asteraceae</taxon>
        <taxon>Asteroideae</taxon>
        <taxon>Heliantheae alliance</taxon>
        <taxon>Heliantheae</taxon>
        <taxon>Xanthium</taxon>
    </lineage>
</organism>
<reference key="1">
    <citation type="journal article" date="2016" name="Plant Cell Physiol.">
        <title>Identification and functional characterization of sesquiterpene synthases from Xanthium strumarium.</title>
        <authorList>
            <person name="Li Y."/>
            <person name="Chen F."/>
            <person name="Li Z."/>
            <person name="Li C."/>
            <person name="Zhang Y."/>
        </authorList>
    </citation>
    <scope>NUCLEOTIDE SEQUENCE [MRNA]</scope>
    <scope>FUNCTION</scope>
    <scope>CATALYTIC ACTIVITY</scope>
    <scope>TISSUE SPECIFICITY</scope>
    <scope>MOTIF</scope>
    <source>
        <tissue>Leaf</tissue>
    </source>
</reference>
<feature type="chain" id="PRO_0000455107" description="Sesquiterpene synthase TPS2">
    <location>
        <begin position="1"/>
        <end position="548"/>
    </location>
</feature>
<feature type="short sequence motif" description="DDXXD motif" evidence="6">
    <location>
        <begin position="301"/>
        <end position="305"/>
    </location>
</feature>
<feature type="binding site" evidence="1">
    <location>
        <position position="264"/>
    </location>
    <ligand>
        <name>(2E,6E)-farnesyl diphosphate</name>
        <dbReference type="ChEBI" id="CHEBI:175763"/>
    </ligand>
</feature>
<feature type="binding site" evidence="1">
    <location>
        <position position="301"/>
    </location>
    <ligand>
        <name>(2E,6E)-farnesyl diphosphate</name>
        <dbReference type="ChEBI" id="CHEBI:175763"/>
    </ligand>
</feature>
<feature type="binding site" evidence="1">
    <location>
        <position position="301"/>
    </location>
    <ligand>
        <name>Mg(2+)</name>
        <dbReference type="ChEBI" id="CHEBI:18420"/>
        <label>1</label>
    </ligand>
</feature>
<feature type="binding site" evidence="1">
    <location>
        <position position="301"/>
    </location>
    <ligand>
        <name>Mg(2+)</name>
        <dbReference type="ChEBI" id="CHEBI:18420"/>
        <label>2</label>
    </ligand>
</feature>
<feature type="binding site" evidence="1">
    <location>
        <position position="305"/>
    </location>
    <ligand>
        <name>(2E,6E)-farnesyl diphosphate</name>
        <dbReference type="ChEBI" id="CHEBI:175763"/>
    </ligand>
</feature>
<feature type="binding site" evidence="1">
    <location>
        <position position="305"/>
    </location>
    <ligand>
        <name>Mg(2+)</name>
        <dbReference type="ChEBI" id="CHEBI:18420"/>
        <label>1</label>
    </ligand>
</feature>
<feature type="binding site" evidence="1">
    <location>
        <position position="305"/>
    </location>
    <ligand>
        <name>Mg(2+)</name>
        <dbReference type="ChEBI" id="CHEBI:18420"/>
        <label>2</label>
    </ligand>
</feature>
<feature type="binding site" evidence="1">
    <location>
        <position position="442"/>
    </location>
    <ligand>
        <name>(2E,6E)-farnesyl diphosphate</name>
        <dbReference type="ChEBI" id="CHEBI:175763"/>
    </ligand>
</feature>
<feature type="binding site" evidence="1">
    <location>
        <position position="453"/>
    </location>
    <ligand>
        <name>Mg(2+)</name>
        <dbReference type="ChEBI" id="CHEBI:18420"/>
        <label>3</label>
    </ligand>
</feature>
<sequence>MSTKQLEVVRPTAKFPPSVWGDQFLIYEENTAEQLEVEEKVKKLIEVVRKDIKSSLEVQTEHANLLKLIDAIQRLGIAYHFEQEIEQALQHIYGAYGDNWKGGNPSLWFRILRQQGFYVSCDIFNELKDENGSFKESLTSDVQGLLDLYEATYLRVQGEAVLEDAQVFTRTHLNKLTNSLTKTNSTLSTHIQDALEEPIRKRLPRLEALRYIPFYGQQEFHNKSLLKLAKLGFILLQSLHKKELSQVSRWWKRLDITKDLPYVRDRMVESYFWALGVYFEPKYSHARMFLAKVFTVTAVIDDTYDSYGTYEELMIFTEAVQRWSVSCIDMLPEYMKPMYQVLMGVYEEMEEILLKDGKEYQLSYAIESMKELTRNYMMEAKWAHEGYVPTTEEHLSVSYVSSGYVMLTTTCFVGMGDLVTDESFKWALSKPPLVKASCIIARLMNDFVSQKEEKEKMHVVSNVDSYMKQYGVTKEYAHNVLKNKIEDAWMDLTLESLTCKNVPMHVKIRVINLTQVLTVMYKGKDNYTEVGEELIHHIRSLLIHGMSI</sequence>
<gene>
    <name evidence="4" type="primary">TPS2</name>
</gene>
<proteinExistence type="evidence at protein level"/>
<protein>
    <recommendedName>
        <fullName evidence="5">Sesquiterpene synthase TPS2</fullName>
    </recommendedName>
    <alternativeName>
        <fullName evidence="4">Guaia-4,6-diene synthase</fullName>
        <ecNumber evidence="3">4.2.3.179</ecNumber>
    </alternativeName>
    <alternativeName>
        <fullName evidence="4">Terpene synthase 2</fullName>
        <shortName evidence="4">XsTPS2</shortName>
    </alternativeName>
</protein>
<evidence type="ECO:0000250" key="1">
    <source>
        <dbReference type="UniProtKB" id="Q40577"/>
    </source>
</evidence>
<evidence type="ECO:0000250" key="2">
    <source>
        <dbReference type="UniProtKB" id="Q6Q3H2"/>
    </source>
</evidence>
<evidence type="ECO:0000269" key="3">
    <source>
    </source>
</evidence>
<evidence type="ECO:0000303" key="4">
    <source>
    </source>
</evidence>
<evidence type="ECO:0000305" key="5"/>
<evidence type="ECO:0000305" key="6">
    <source>
    </source>
</evidence>
<dbReference type="EC" id="4.2.3.179" evidence="3"/>
<dbReference type="EMBL" id="KT317709">
    <property type="protein sequence ID" value="AMP42991.1"/>
    <property type="molecule type" value="mRNA"/>
</dbReference>
<dbReference type="SMR" id="A0A142BX74"/>
<dbReference type="KEGG" id="ag:AMP42991"/>
<dbReference type="BRENDA" id="4.2.3.179">
    <property type="organism ID" value="15340"/>
</dbReference>
<dbReference type="UniPathway" id="UPA00213"/>
<dbReference type="GO" id="GO:0005737">
    <property type="term" value="C:cytoplasm"/>
    <property type="evidence" value="ECO:0007669"/>
    <property type="project" value="UniProtKB-SubCell"/>
</dbReference>
<dbReference type="GO" id="GO:0000287">
    <property type="term" value="F:magnesium ion binding"/>
    <property type="evidence" value="ECO:0007669"/>
    <property type="project" value="InterPro"/>
</dbReference>
<dbReference type="GO" id="GO:0010333">
    <property type="term" value="F:terpene synthase activity"/>
    <property type="evidence" value="ECO:0007669"/>
    <property type="project" value="InterPro"/>
</dbReference>
<dbReference type="GO" id="GO:0016102">
    <property type="term" value="P:diterpenoid biosynthetic process"/>
    <property type="evidence" value="ECO:0007669"/>
    <property type="project" value="InterPro"/>
</dbReference>
<dbReference type="GO" id="GO:0046246">
    <property type="term" value="P:terpene biosynthetic process"/>
    <property type="evidence" value="ECO:0007669"/>
    <property type="project" value="UniProtKB-ARBA"/>
</dbReference>
<dbReference type="CDD" id="cd00684">
    <property type="entry name" value="Terpene_cyclase_plant_C1"/>
    <property type="match status" value="1"/>
</dbReference>
<dbReference type="FunFam" id="1.10.600.10:FF:000007">
    <property type="entry name" value="Isoprene synthase, chloroplastic"/>
    <property type="match status" value="1"/>
</dbReference>
<dbReference type="FunFam" id="1.50.10.130:FF:000001">
    <property type="entry name" value="Isoprene synthase, chloroplastic"/>
    <property type="match status" value="1"/>
</dbReference>
<dbReference type="Gene3D" id="1.10.600.10">
    <property type="entry name" value="Farnesyl Diphosphate Synthase"/>
    <property type="match status" value="1"/>
</dbReference>
<dbReference type="Gene3D" id="1.50.10.130">
    <property type="entry name" value="Terpene synthase, N-terminal domain"/>
    <property type="match status" value="1"/>
</dbReference>
<dbReference type="InterPro" id="IPR008949">
    <property type="entry name" value="Isoprenoid_synthase_dom_sf"/>
</dbReference>
<dbReference type="InterPro" id="IPR034741">
    <property type="entry name" value="Terpene_cyclase-like_1_C"/>
</dbReference>
<dbReference type="InterPro" id="IPR044814">
    <property type="entry name" value="Terpene_cyclase_plant_C1"/>
</dbReference>
<dbReference type="InterPro" id="IPR001906">
    <property type="entry name" value="Terpene_synth_N"/>
</dbReference>
<dbReference type="InterPro" id="IPR036965">
    <property type="entry name" value="Terpene_synth_N_sf"/>
</dbReference>
<dbReference type="InterPro" id="IPR050148">
    <property type="entry name" value="Terpene_synthase-like"/>
</dbReference>
<dbReference type="InterPro" id="IPR005630">
    <property type="entry name" value="Terpene_synthase_metal-bd"/>
</dbReference>
<dbReference type="InterPro" id="IPR008930">
    <property type="entry name" value="Terpenoid_cyclase/PrenylTrfase"/>
</dbReference>
<dbReference type="PANTHER" id="PTHR31225">
    <property type="entry name" value="OS04G0344100 PROTEIN-RELATED"/>
    <property type="match status" value="1"/>
</dbReference>
<dbReference type="PANTHER" id="PTHR31225:SF196">
    <property type="entry name" value="TERPENOID CYCLASES_PROTEIN PRENYLTRANSFERASE ALPHA-ALPHA TOROID-RELATED"/>
    <property type="match status" value="1"/>
</dbReference>
<dbReference type="Pfam" id="PF01397">
    <property type="entry name" value="Terpene_synth"/>
    <property type="match status" value="1"/>
</dbReference>
<dbReference type="Pfam" id="PF03936">
    <property type="entry name" value="Terpene_synth_C"/>
    <property type="match status" value="1"/>
</dbReference>
<dbReference type="SFLD" id="SFLDS00005">
    <property type="entry name" value="Isoprenoid_Synthase_Type_I"/>
    <property type="match status" value="1"/>
</dbReference>
<dbReference type="SFLD" id="SFLDG01019">
    <property type="entry name" value="Terpene_Cyclase_Like_1_C_Termi"/>
    <property type="match status" value="1"/>
</dbReference>
<dbReference type="SUPFAM" id="SSF48239">
    <property type="entry name" value="Terpenoid cyclases/Protein prenyltransferases"/>
    <property type="match status" value="1"/>
</dbReference>
<dbReference type="SUPFAM" id="SSF48576">
    <property type="entry name" value="Terpenoid synthases"/>
    <property type="match status" value="1"/>
</dbReference>
<accession>A0A142BX74</accession>
<comment type="function">
    <text evidence="3">Sesquiterpene synthase involved in the biosynthesis of volatile compounds (PubMed:26858282). Mediates the conversion of (2E,6E)-farnesyl diphosphate (FPP) into guaia-4,6-diene (PubMed:26858282).</text>
</comment>
<comment type="catalytic activity">
    <reaction evidence="3">
        <text>(2E,6E)-farnesyl diphosphate = guaia-4,6-diene + diphosphate</text>
        <dbReference type="Rhea" id="RHEA:54108"/>
        <dbReference type="ChEBI" id="CHEBI:33019"/>
        <dbReference type="ChEBI" id="CHEBI:138049"/>
        <dbReference type="ChEBI" id="CHEBI:175763"/>
        <dbReference type="EC" id="4.2.3.179"/>
    </reaction>
    <physiologicalReaction direction="left-to-right" evidence="3">
        <dbReference type="Rhea" id="RHEA:54109"/>
    </physiologicalReaction>
</comment>
<comment type="cofactor">
    <cofactor evidence="1">
        <name>Mg(2+)</name>
        <dbReference type="ChEBI" id="CHEBI:18420"/>
    </cofactor>
    <text evidence="1">Binds 3 Mg(2+) ions per subunit.</text>
</comment>
<comment type="pathway">
    <text evidence="5">Secondary metabolite biosynthesis; terpenoid biosynthesis.</text>
</comment>
<comment type="subunit">
    <text evidence="1">Monomer.</text>
</comment>
<comment type="subcellular location">
    <subcellularLocation>
        <location evidence="2">Cytoplasm</location>
    </subcellularLocation>
</comment>
<comment type="tissue specificity">
    <text evidence="3">Highly expressed in glandular trichomes (PubMed:26858282). Expressed in leaves and stems (PubMed:26858282).</text>
</comment>
<comment type="domain">
    <text evidence="6">The Asp-Asp-Xaa-Xaa-Asp/Glu (DDXXD/E) motif is important for the catalytic activity, presumably through binding to Mg(2+).</text>
</comment>
<comment type="similarity">
    <text evidence="5">Belongs to the terpene synthase family. Tpsa subfamily.</text>
</comment>